<evidence type="ECO:0000255" key="1">
    <source>
        <dbReference type="HAMAP-Rule" id="MF_00113"/>
    </source>
</evidence>
<organism>
    <name type="scientific">Salmonella paratyphi C (strain RKS4594)</name>
    <dbReference type="NCBI Taxonomy" id="476213"/>
    <lineage>
        <taxon>Bacteria</taxon>
        <taxon>Pseudomonadati</taxon>
        <taxon>Pseudomonadota</taxon>
        <taxon>Gammaproteobacteria</taxon>
        <taxon>Enterobacterales</taxon>
        <taxon>Enterobacteriaceae</taxon>
        <taxon>Salmonella</taxon>
    </lineage>
</organism>
<reference key="1">
    <citation type="journal article" date="2009" name="PLoS ONE">
        <title>Salmonella paratyphi C: genetic divergence from Salmonella choleraesuis and pathogenic convergence with Salmonella typhi.</title>
        <authorList>
            <person name="Liu W.-Q."/>
            <person name="Feng Y."/>
            <person name="Wang Y."/>
            <person name="Zou Q.-H."/>
            <person name="Chen F."/>
            <person name="Guo J.-T."/>
            <person name="Peng Y.-H."/>
            <person name="Jin Y."/>
            <person name="Li Y.-G."/>
            <person name="Hu S.-N."/>
            <person name="Johnston R.N."/>
            <person name="Liu G.-R."/>
            <person name="Liu S.-L."/>
        </authorList>
    </citation>
    <scope>NUCLEOTIDE SEQUENCE [LARGE SCALE GENOMIC DNA]</scope>
    <source>
        <strain>RKS4594</strain>
    </source>
</reference>
<comment type="function">
    <text evidence="1">Transfers and isomerizes the ribose moiety from AdoMet to the 7-aminomethyl group of 7-deazaguanine (preQ1-tRNA) to give epoxyqueuosine (oQ-tRNA).</text>
</comment>
<comment type="catalytic activity">
    <reaction evidence="1">
        <text>7-aminomethyl-7-carbaguanosine(34) in tRNA + S-adenosyl-L-methionine = epoxyqueuosine(34) in tRNA + adenine + L-methionine + 2 H(+)</text>
        <dbReference type="Rhea" id="RHEA:32155"/>
        <dbReference type="Rhea" id="RHEA-COMP:10342"/>
        <dbReference type="Rhea" id="RHEA-COMP:18582"/>
        <dbReference type="ChEBI" id="CHEBI:15378"/>
        <dbReference type="ChEBI" id="CHEBI:16708"/>
        <dbReference type="ChEBI" id="CHEBI:57844"/>
        <dbReference type="ChEBI" id="CHEBI:59789"/>
        <dbReference type="ChEBI" id="CHEBI:82833"/>
        <dbReference type="ChEBI" id="CHEBI:194443"/>
        <dbReference type="EC" id="2.4.99.17"/>
    </reaction>
</comment>
<comment type="pathway">
    <text evidence="1">tRNA modification; tRNA-queuosine biosynthesis.</text>
</comment>
<comment type="subunit">
    <text evidence="1">Monomer.</text>
</comment>
<comment type="subcellular location">
    <subcellularLocation>
        <location evidence="1">Cytoplasm</location>
    </subcellularLocation>
</comment>
<comment type="similarity">
    <text evidence="1">Belongs to the QueA family.</text>
</comment>
<protein>
    <recommendedName>
        <fullName evidence="1">S-adenosylmethionine:tRNA ribosyltransferase-isomerase</fullName>
        <ecNumber evidence="1">2.4.99.17</ecNumber>
    </recommendedName>
    <alternativeName>
        <fullName evidence="1">Queuosine biosynthesis protein QueA</fullName>
    </alternativeName>
</protein>
<feature type="chain" id="PRO_1000119162" description="S-adenosylmethionine:tRNA ribosyltransferase-isomerase">
    <location>
        <begin position="1"/>
        <end position="354"/>
    </location>
</feature>
<proteinExistence type="inferred from homology"/>
<keyword id="KW-0963">Cytoplasm</keyword>
<keyword id="KW-0671">Queuosine biosynthesis</keyword>
<keyword id="KW-0949">S-adenosyl-L-methionine</keyword>
<keyword id="KW-0808">Transferase</keyword>
<gene>
    <name evidence="1" type="primary">queA</name>
    <name type="ordered locus">SPC_0415</name>
</gene>
<name>QUEA_SALPC</name>
<dbReference type="EC" id="2.4.99.17" evidence="1"/>
<dbReference type="EMBL" id="CP000857">
    <property type="protein sequence ID" value="ACN44598.1"/>
    <property type="molecule type" value="Genomic_DNA"/>
</dbReference>
<dbReference type="RefSeq" id="WP_001266478.1">
    <property type="nucleotide sequence ID" value="NC_012125.1"/>
</dbReference>
<dbReference type="SMR" id="C0Q7S8"/>
<dbReference type="KEGG" id="sei:SPC_0415"/>
<dbReference type="HOGENOM" id="CLU_039110_1_0_6"/>
<dbReference type="UniPathway" id="UPA00392"/>
<dbReference type="Proteomes" id="UP000001599">
    <property type="component" value="Chromosome"/>
</dbReference>
<dbReference type="GO" id="GO:0005737">
    <property type="term" value="C:cytoplasm"/>
    <property type="evidence" value="ECO:0007669"/>
    <property type="project" value="UniProtKB-SubCell"/>
</dbReference>
<dbReference type="GO" id="GO:0051075">
    <property type="term" value="F:S-adenosylmethionine:tRNA ribosyltransferase-isomerase activity"/>
    <property type="evidence" value="ECO:0007669"/>
    <property type="project" value="UniProtKB-EC"/>
</dbReference>
<dbReference type="GO" id="GO:0008616">
    <property type="term" value="P:queuosine biosynthetic process"/>
    <property type="evidence" value="ECO:0007669"/>
    <property type="project" value="UniProtKB-UniRule"/>
</dbReference>
<dbReference type="GO" id="GO:0002099">
    <property type="term" value="P:tRNA wobble guanine modification"/>
    <property type="evidence" value="ECO:0007669"/>
    <property type="project" value="TreeGrafter"/>
</dbReference>
<dbReference type="FunFam" id="2.40.10.240:FF:000001">
    <property type="entry name" value="S-adenosylmethionine:tRNA ribosyltransferase-isomerase"/>
    <property type="match status" value="1"/>
</dbReference>
<dbReference type="FunFam" id="3.40.1780.10:FF:000001">
    <property type="entry name" value="S-adenosylmethionine:tRNA ribosyltransferase-isomerase"/>
    <property type="match status" value="1"/>
</dbReference>
<dbReference type="Gene3D" id="2.40.10.240">
    <property type="entry name" value="QueA-like"/>
    <property type="match status" value="1"/>
</dbReference>
<dbReference type="Gene3D" id="3.40.1780.10">
    <property type="entry name" value="QueA-like"/>
    <property type="match status" value="1"/>
</dbReference>
<dbReference type="HAMAP" id="MF_00113">
    <property type="entry name" value="QueA"/>
    <property type="match status" value="1"/>
</dbReference>
<dbReference type="InterPro" id="IPR003699">
    <property type="entry name" value="QueA"/>
</dbReference>
<dbReference type="InterPro" id="IPR042118">
    <property type="entry name" value="QueA_dom1"/>
</dbReference>
<dbReference type="InterPro" id="IPR042119">
    <property type="entry name" value="QueA_dom2"/>
</dbReference>
<dbReference type="InterPro" id="IPR036100">
    <property type="entry name" value="QueA_sf"/>
</dbReference>
<dbReference type="NCBIfam" id="NF001140">
    <property type="entry name" value="PRK00147.1"/>
    <property type="match status" value="1"/>
</dbReference>
<dbReference type="NCBIfam" id="TIGR00113">
    <property type="entry name" value="queA"/>
    <property type="match status" value="1"/>
</dbReference>
<dbReference type="PANTHER" id="PTHR30307">
    <property type="entry name" value="S-ADENOSYLMETHIONINE:TRNA RIBOSYLTRANSFERASE-ISOMERASE"/>
    <property type="match status" value="1"/>
</dbReference>
<dbReference type="PANTHER" id="PTHR30307:SF0">
    <property type="entry name" value="S-ADENOSYLMETHIONINE:TRNA RIBOSYLTRANSFERASE-ISOMERASE"/>
    <property type="match status" value="1"/>
</dbReference>
<dbReference type="Pfam" id="PF02547">
    <property type="entry name" value="Queuosine_synth"/>
    <property type="match status" value="1"/>
</dbReference>
<dbReference type="SUPFAM" id="SSF111337">
    <property type="entry name" value="QueA-like"/>
    <property type="match status" value="1"/>
</dbReference>
<sequence length="354" mass="39242">MRVTDFSFELPDSLIAHYPQPERSRCRLLSLEGPTGALTHGTFTDLLDKLNPGDLLVFNNTRVIPARLFGRKASGGKIEVLVERMLDDKRILAHIRASKAPKPGTELLLGDDESIHATMTARHGALFEVEFNDPRPVLDILNAIGHMPLPPYIDRPDEDADRELYQTVYSEKPGAVAAPTAGLHFDEPLLAALREKGVEMAFVTLHVGAGTFQPVRVDTIEDHIMHSEYAEVPQEVVDAVLAAKARGNRVIAVGTTSVRSLESAAQAAKSDLIEPFFGDTQIFIYPGYQYKVIDALITNFHLPESTLIMLVSAFAGYQHTMNAYKTAVEQKYRFFSYGDAMFITYNPQAISERP</sequence>
<accession>C0Q7S8</accession>